<comment type="function">
    <text evidence="1">Catalyzes the attachment of valine to tRNA(Val). As ValRS can inadvertently accommodate and process structurally similar amino acids such as threonine, to avoid such errors, it has a 'posttransfer' editing activity that hydrolyzes mischarged Thr-tRNA(Val) in a tRNA-dependent manner.</text>
</comment>
<comment type="catalytic activity">
    <reaction evidence="1">
        <text>tRNA(Val) + L-valine + ATP = L-valyl-tRNA(Val) + AMP + diphosphate</text>
        <dbReference type="Rhea" id="RHEA:10704"/>
        <dbReference type="Rhea" id="RHEA-COMP:9672"/>
        <dbReference type="Rhea" id="RHEA-COMP:9708"/>
        <dbReference type="ChEBI" id="CHEBI:30616"/>
        <dbReference type="ChEBI" id="CHEBI:33019"/>
        <dbReference type="ChEBI" id="CHEBI:57762"/>
        <dbReference type="ChEBI" id="CHEBI:78442"/>
        <dbReference type="ChEBI" id="CHEBI:78537"/>
        <dbReference type="ChEBI" id="CHEBI:456215"/>
        <dbReference type="EC" id="6.1.1.9"/>
    </reaction>
</comment>
<comment type="subunit">
    <text evidence="1">Monomer.</text>
</comment>
<comment type="subcellular location">
    <subcellularLocation>
        <location evidence="1">Cytoplasm</location>
    </subcellularLocation>
</comment>
<comment type="domain">
    <text evidence="1">ValRS has two distinct active sites: one for aminoacylation and one for editing. The misactivated threonine is translocated from the active site to the editing site.</text>
</comment>
<comment type="domain">
    <text evidence="1">The C-terminal coiled-coil domain is crucial for aminoacylation activity.</text>
</comment>
<comment type="similarity">
    <text evidence="1">Belongs to the class-I aminoacyl-tRNA synthetase family. ValS type 1 subfamily.</text>
</comment>
<proteinExistence type="inferred from homology"/>
<evidence type="ECO:0000255" key="1">
    <source>
        <dbReference type="HAMAP-Rule" id="MF_02004"/>
    </source>
</evidence>
<gene>
    <name evidence="1" type="primary">valS</name>
    <name type="ordered locus">PGN_1229</name>
</gene>
<accession>B2RK53</accession>
<name>SYV_PORG3</name>
<sequence length="876" mass="100258">MEIASKYNPEEVESKWYNYWMEYGCFISVPDGRKPYTVVIPPPNVTGVLHMGHMLNNTIQDILVRRARMKGYNACWVPGTDHASIATEAKVVGRLAAQGISKQDLGREEFLRHAWDWTHEHGGIILEQLKRLGASCDWTRTAFTMDESRSESVIKVFVDLYNKGLIYRGIRVVNWDPKALTALSDEEVIYKETNGKLYYLRYFVENEPDKYIIVATTRPETIMGDTAVCVNPNDERYRWLRGKRVIVPTVGRAVPIIEDEYVDMEFGTGCLKVTPAHDVNDYMLGQKHRLESIDIFHDNGILNEHGGPYAGMDRFDVRKKIEQDLIDAGLMERVENYVNKVGYSERTDVPIEPKLSMQWFLQMESLAKSALDAVMNDEIKLHPAKFKNTYRHWMENVKDWCISRQLWWGHRIPAYYLPDGSIVVAETAEKAVELARKQTGSDSLTAEDLRQDSDSLDTWFSSWLWPISVFGDVMDPENEELDYYYPTSDLVTAPDILFFWVARMIMAGYEYRGKKPFDNVYLTGIVRDGQGRKMSKSLGNSPDPIMLMEKYGADGVRMGLMMAAPAGNDVLFDESLSEQGRNFCNKIWNAFRLVKGWQQAETATQPEASALAVKWFGYRLDEVKTELDDLFSKYRLSEALTLVYKLFWDDFSSWYLEMVKPAYGQPMDAKTYGSTIGFFDQLLRLLHPFMPFITEELWHALASRHDGETIMLCLLPDAHETDRDFLQAFDRTREIIAAIRNIRTGKNVPFKEKLTLEAGNEHDASFDAVIIKMGNLEAINRVEEKTSGSTSFLIGTLEYAIPMGALIDVEEEIKKLSDELAYQEKFLASVMKKLGNESFVAKAPQAVIELEQKKKSDAEARIATLRDSLNQLQSTK</sequence>
<protein>
    <recommendedName>
        <fullName evidence="1">Valine--tRNA ligase</fullName>
        <ecNumber evidence="1">6.1.1.9</ecNumber>
    </recommendedName>
    <alternativeName>
        <fullName evidence="1">Valyl-tRNA synthetase</fullName>
        <shortName evidence="1">ValRS</shortName>
    </alternativeName>
</protein>
<organism>
    <name type="scientific">Porphyromonas gingivalis (strain ATCC 33277 / DSM 20709 / CIP 103683 / JCM 12257 / NCTC 11834 / 2561)</name>
    <dbReference type="NCBI Taxonomy" id="431947"/>
    <lineage>
        <taxon>Bacteria</taxon>
        <taxon>Pseudomonadati</taxon>
        <taxon>Bacteroidota</taxon>
        <taxon>Bacteroidia</taxon>
        <taxon>Bacteroidales</taxon>
        <taxon>Porphyromonadaceae</taxon>
        <taxon>Porphyromonas</taxon>
    </lineage>
</organism>
<reference key="1">
    <citation type="journal article" date="2008" name="DNA Res.">
        <title>Determination of the genome sequence of Porphyromonas gingivalis strain ATCC 33277 and genomic comparison with strain W83 revealed extensive genome rearrangements in P. gingivalis.</title>
        <authorList>
            <person name="Naito M."/>
            <person name="Hirakawa H."/>
            <person name="Yamashita A."/>
            <person name="Ohara N."/>
            <person name="Shoji M."/>
            <person name="Yukitake H."/>
            <person name="Nakayama K."/>
            <person name="Toh H."/>
            <person name="Yoshimura F."/>
            <person name="Kuhara S."/>
            <person name="Hattori M."/>
            <person name="Hayashi T."/>
            <person name="Nakayama K."/>
        </authorList>
    </citation>
    <scope>NUCLEOTIDE SEQUENCE [LARGE SCALE GENOMIC DNA]</scope>
    <source>
        <strain>ATCC 33277 / DSM 20709 / CIP 103683 / JCM 12257 / NCTC 11834 / 2561</strain>
    </source>
</reference>
<feature type="chain" id="PRO_1000189242" description="Valine--tRNA ligase">
    <location>
        <begin position="1"/>
        <end position="876"/>
    </location>
</feature>
<feature type="coiled-coil region" evidence="1">
    <location>
        <begin position="804"/>
        <end position="876"/>
    </location>
</feature>
<feature type="short sequence motif" description="'HIGH' region">
    <location>
        <begin position="43"/>
        <end position="53"/>
    </location>
</feature>
<feature type="short sequence motif" description="'KMSKS' region">
    <location>
        <begin position="533"/>
        <end position="537"/>
    </location>
</feature>
<feature type="binding site" evidence="1">
    <location>
        <position position="536"/>
    </location>
    <ligand>
        <name>ATP</name>
        <dbReference type="ChEBI" id="CHEBI:30616"/>
    </ligand>
</feature>
<dbReference type="EC" id="6.1.1.9" evidence="1"/>
<dbReference type="EMBL" id="AP009380">
    <property type="protein sequence ID" value="BAG33748.1"/>
    <property type="molecule type" value="Genomic_DNA"/>
</dbReference>
<dbReference type="RefSeq" id="WP_012458123.1">
    <property type="nucleotide sequence ID" value="NC_010729.1"/>
</dbReference>
<dbReference type="SMR" id="B2RK53"/>
<dbReference type="GeneID" id="29256433"/>
<dbReference type="KEGG" id="pgn:PGN_1229"/>
<dbReference type="eggNOG" id="COG0525">
    <property type="taxonomic scope" value="Bacteria"/>
</dbReference>
<dbReference type="HOGENOM" id="CLU_001493_0_2_10"/>
<dbReference type="OrthoDB" id="9810365at2"/>
<dbReference type="BioCyc" id="PGIN431947:G1G2V-1404-MONOMER"/>
<dbReference type="Proteomes" id="UP000008842">
    <property type="component" value="Chromosome"/>
</dbReference>
<dbReference type="GO" id="GO:0005829">
    <property type="term" value="C:cytosol"/>
    <property type="evidence" value="ECO:0007669"/>
    <property type="project" value="TreeGrafter"/>
</dbReference>
<dbReference type="GO" id="GO:0002161">
    <property type="term" value="F:aminoacyl-tRNA deacylase activity"/>
    <property type="evidence" value="ECO:0007669"/>
    <property type="project" value="InterPro"/>
</dbReference>
<dbReference type="GO" id="GO:0005524">
    <property type="term" value="F:ATP binding"/>
    <property type="evidence" value="ECO:0007669"/>
    <property type="project" value="UniProtKB-UniRule"/>
</dbReference>
<dbReference type="GO" id="GO:0004832">
    <property type="term" value="F:valine-tRNA ligase activity"/>
    <property type="evidence" value="ECO:0007669"/>
    <property type="project" value="UniProtKB-UniRule"/>
</dbReference>
<dbReference type="GO" id="GO:0006438">
    <property type="term" value="P:valyl-tRNA aminoacylation"/>
    <property type="evidence" value="ECO:0007669"/>
    <property type="project" value="UniProtKB-UniRule"/>
</dbReference>
<dbReference type="CDD" id="cd07962">
    <property type="entry name" value="Anticodon_Ia_Val"/>
    <property type="match status" value="1"/>
</dbReference>
<dbReference type="CDD" id="cd00817">
    <property type="entry name" value="ValRS_core"/>
    <property type="match status" value="1"/>
</dbReference>
<dbReference type="FunFam" id="1.10.287.380:FF:000001">
    <property type="entry name" value="Valine--tRNA ligase"/>
    <property type="match status" value="1"/>
</dbReference>
<dbReference type="FunFam" id="3.40.50.620:FF:000032">
    <property type="entry name" value="Valine--tRNA ligase"/>
    <property type="match status" value="1"/>
</dbReference>
<dbReference type="FunFam" id="3.90.740.10:FF:000015">
    <property type="entry name" value="Valine--tRNA ligase"/>
    <property type="match status" value="1"/>
</dbReference>
<dbReference type="Gene3D" id="2.170.220.10">
    <property type="match status" value="1"/>
</dbReference>
<dbReference type="Gene3D" id="3.40.50.620">
    <property type="entry name" value="HUPs"/>
    <property type="match status" value="2"/>
</dbReference>
<dbReference type="Gene3D" id="1.10.730.10">
    <property type="entry name" value="Isoleucyl-tRNA Synthetase, Domain 1"/>
    <property type="match status" value="1"/>
</dbReference>
<dbReference type="Gene3D" id="1.10.287.380">
    <property type="entry name" value="Valyl-tRNA synthetase, C-terminal domain"/>
    <property type="match status" value="1"/>
</dbReference>
<dbReference type="Gene3D" id="3.90.740.10">
    <property type="entry name" value="Valyl/Leucyl/Isoleucyl-tRNA synthetase, editing domain"/>
    <property type="match status" value="1"/>
</dbReference>
<dbReference type="HAMAP" id="MF_02004">
    <property type="entry name" value="Val_tRNA_synth_type1"/>
    <property type="match status" value="1"/>
</dbReference>
<dbReference type="InterPro" id="IPR001412">
    <property type="entry name" value="aa-tRNA-synth_I_CS"/>
</dbReference>
<dbReference type="InterPro" id="IPR002300">
    <property type="entry name" value="aa-tRNA-synth_Ia"/>
</dbReference>
<dbReference type="InterPro" id="IPR033705">
    <property type="entry name" value="Anticodon_Ia_Val"/>
</dbReference>
<dbReference type="InterPro" id="IPR013155">
    <property type="entry name" value="M/V/L/I-tRNA-synth_anticd-bd"/>
</dbReference>
<dbReference type="InterPro" id="IPR014729">
    <property type="entry name" value="Rossmann-like_a/b/a_fold"/>
</dbReference>
<dbReference type="InterPro" id="IPR010978">
    <property type="entry name" value="tRNA-bd_arm"/>
</dbReference>
<dbReference type="InterPro" id="IPR009080">
    <property type="entry name" value="tRNAsynth_Ia_anticodon-bd"/>
</dbReference>
<dbReference type="InterPro" id="IPR037118">
    <property type="entry name" value="Val-tRNA_synth_C_sf"/>
</dbReference>
<dbReference type="InterPro" id="IPR019499">
    <property type="entry name" value="Val-tRNA_synth_tRNA-bd"/>
</dbReference>
<dbReference type="InterPro" id="IPR009008">
    <property type="entry name" value="Val/Leu/Ile-tRNA-synth_edit"/>
</dbReference>
<dbReference type="InterPro" id="IPR002303">
    <property type="entry name" value="Valyl-tRNA_ligase"/>
</dbReference>
<dbReference type="NCBIfam" id="NF004349">
    <property type="entry name" value="PRK05729.1"/>
    <property type="match status" value="1"/>
</dbReference>
<dbReference type="NCBIfam" id="TIGR00422">
    <property type="entry name" value="valS"/>
    <property type="match status" value="1"/>
</dbReference>
<dbReference type="PANTHER" id="PTHR11946:SF109">
    <property type="entry name" value="VALINE--TRNA LIGASE"/>
    <property type="match status" value="1"/>
</dbReference>
<dbReference type="PANTHER" id="PTHR11946">
    <property type="entry name" value="VALYL-TRNA SYNTHETASES"/>
    <property type="match status" value="1"/>
</dbReference>
<dbReference type="Pfam" id="PF08264">
    <property type="entry name" value="Anticodon_1"/>
    <property type="match status" value="1"/>
</dbReference>
<dbReference type="Pfam" id="PF00133">
    <property type="entry name" value="tRNA-synt_1"/>
    <property type="match status" value="1"/>
</dbReference>
<dbReference type="Pfam" id="PF10458">
    <property type="entry name" value="Val_tRNA-synt_C"/>
    <property type="match status" value="1"/>
</dbReference>
<dbReference type="PRINTS" id="PR00986">
    <property type="entry name" value="TRNASYNTHVAL"/>
</dbReference>
<dbReference type="SUPFAM" id="SSF47323">
    <property type="entry name" value="Anticodon-binding domain of a subclass of class I aminoacyl-tRNA synthetases"/>
    <property type="match status" value="1"/>
</dbReference>
<dbReference type="SUPFAM" id="SSF52374">
    <property type="entry name" value="Nucleotidylyl transferase"/>
    <property type="match status" value="1"/>
</dbReference>
<dbReference type="SUPFAM" id="SSF46589">
    <property type="entry name" value="tRNA-binding arm"/>
    <property type="match status" value="1"/>
</dbReference>
<dbReference type="SUPFAM" id="SSF50677">
    <property type="entry name" value="ValRS/IleRS/LeuRS editing domain"/>
    <property type="match status" value="1"/>
</dbReference>
<dbReference type="PROSITE" id="PS00178">
    <property type="entry name" value="AA_TRNA_LIGASE_I"/>
    <property type="match status" value="1"/>
</dbReference>
<keyword id="KW-0030">Aminoacyl-tRNA synthetase</keyword>
<keyword id="KW-0067">ATP-binding</keyword>
<keyword id="KW-0175">Coiled coil</keyword>
<keyword id="KW-0963">Cytoplasm</keyword>
<keyword id="KW-0436">Ligase</keyword>
<keyword id="KW-0547">Nucleotide-binding</keyword>
<keyword id="KW-0648">Protein biosynthesis</keyword>